<comment type="function">
    <text evidence="1">Cell wall formation. Adds enolpyruvyl to UDP-N-acetylglucosamine.</text>
</comment>
<comment type="catalytic activity">
    <reaction evidence="1">
        <text>phosphoenolpyruvate + UDP-N-acetyl-alpha-D-glucosamine = UDP-N-acetyl-3-O-(1-carboxyvinyl)-alpha-D-glucosamine + phosphate</text>
        <dbReference type="Rhea" id="RHEA:18681"/>
        <dbReference type="ChEBI" id="CHEBI:43474"/>
        <dbReference type="ChEBI" id="CHEBI:57705"/>
        <dbReference type="ChEBI" id="CHEBI:58702"/>
        <dbReference type="ChEBI" id="CHEBI:68483"/>
        <dbReference type="EC" id="2.5.1.7"/>
    </reaction>
</comment>
<comment type="pathway">
    <text evidence="1">Cell wall biogenesis; peptidoglycan biosynthesis.</text>
</comment>
<comment type="subcellular location">
    <subcellularLocation>
        <location evidence="1">Cytoplasm</location>
    </subcellularLocation>
</comment>
<comment type="similarity">
    <text evidence="1">Belongs to the EPSP synthase family. MurA subfamily.</text>
</comment>
<sequence>MDKFRVQGPTKLQGEVTISGAKNAALPILFAALLAEEPVEIQNVPKLKDVDTSMKLLSQLGAKVERNGSVHIDARDVNVFCAPYDLVKTMRASIWALGPLVARFGQGQVSLPGGCTIGARPVDLHISGLEQLGATIKLEEGYVKASVDGRLKGAHIVMDKVSVGATVTIMCSATLAEGTTIIENAAREPEIVDTANFLITLGAKISGQGTDRIVIEGVERLGGGVYRVLPDRIETGTFLVAAAISRGKIICRNAQPDTLDAVLAKLRDAGADIEVGEDWISLDMHGKRPKAVNVRTAPHPAFPTDMQAQFTLLNLVAEGTGFITETVFENRFMHVPELSRMGAHAEIESNTVICHGVEKLSGAQVMATDLRASASLVLAGCIAEGTTVVDRIYHIDRGYERIEDKLRALGVNIERVKGE</sequence>
<accession>Q32BE4</accession>
<proteinExistence type="inferred from homology"/>
<reference key="1">
    <citation type="journal article" date="2005" name="Nucleic Acids Res.">
        <title>Genome dynamics and diversity of Shigella species, the etiologic agents of bacillary dysentery.</title>
        <authorList>
            <person name="Yang F."/>
            <person name="Yang J."/>
            <person name="Zhang X."/>
            <person name="Chen L."/>
            <person name="Jiang Y."/>
            <person name="Yan Y."/>
            <person name="Tang X."/>
            <person name="Wang J."/>
            <person name="Xiong Z."/>
            <person name="Dong J."/>
            <person name="Xue Y."/>
            <person name="Zhu Y."/>
            <person name="Xu X."/>
            <person name="Sun L."/>
            <person name="Chen S."/>
            <person name="Nie H."/>
            <person name="Peng J."/>
            <person name="Xu J."/>
            <person name="Wang Y."/>
            <person name="Yuan Z."/>
            <person name="Wen Y."/>
            <person name="Yao Z."/>
            <person name="Shen Y."/>
            <person name="Qiang B."/>
            <person name="Hou Y."/>
            <person name="Yu J."/>
            <person name="Jin Q."/>
        </authorList>
    </citation>
    <scope>NUCLEOTIDE SEQUENCE [LARGE SCALE GENOMIC DNA]</scope>
    <source>
        <strain>Sd197</strain>
    </source>
</reference>
<gene>
    <name evidence="1" type="primary">murA</name>
    <name type="ordered locus">SDY_3370</name>
</gene>
<evidence type="ECO:0000255" key="1">
    <source>
        <dbReference type="HAMAP-Rule" id="MF_00111"/>
    </source>
</evidence>
<dbReference type="EC" id="2.5.1.7" evidence="1"/>
<dbReference type="EMBL" id="CP000034">
    <property type="protein sequence ID" value="ABB63361.1"/>
    <property type="molecule type" value="Genomic_DNA"/>
</dbReference>
<dbReference type="RefSeq" id="WP_000357268.1">
    <property type="nucleotide sequence ID" value="NC_007606.1"/>
</dbReference>
<dbReference type="RefSeq" id="YP_404852.1">
    <property type="nucleotide sequence ID" value="NC_007606.1"/>
</dbReference>
<dbReference type="SMR" id="Q32BE4"/>
<dbReference type="STRING" id="300267.SDY_3370"/>
<dbReference type="EnsemblBacteria" id="ABB63361">
    <property type="protein sequence ID" value="ABB63361"/>
    <property type="gene ID" value="SDY_3370"/>
</dbReference>
<dbReference type="KEGG" id="sdy:SDY_3370"/>
<dbReference type="PATRIC" id="fig|300267.13.peg.4024"/>
<dbReference type="HOGENOM" id="CLU_027387_0_0_6"/>
<dbReference type="UniPathway" id="UPA00219"/>
<dbReference type="Proteomes" id="UP000002716">
    <property type="component" value="Chromosome"/>
</dbReference>
<dbReference type="GO" id="GO:0005737">
    <property type="term" value="C:cytoplasm"/>
    <property type="evidence" value="ECO:0007669"/>
    <property type="project" value="UniProtKB-SubCell"/>
</dbReference>
<dbReference type="GO" id="GO:0008760">
    <property type="term" value="F:UDP-N-acetylglucosamine 1-carboxyvinyltransferase activity"/>
    <property type="evidence" value="ECO:0007669"/>
    <property type="project" value="UniProtKB-UniRule"/>
</dbReference>
<dbReference type="GO" id="GO:0051301">
    <property type="term" value="P:cell division"/>
    <property type="evidence" value="ECO:0007669"/>
    <property type="project" value="UniProtKB-KW"/>
</dbReference>
<dbReference type="GO" id="GO:0071555">
    <property type="term" value="P:cell wall organization"/>
    <property type="evidence" value="ECO:0007669"/>
    <property type="project" value="UniProtKB-KW"/>
</dbReference>
<dbReference type="GO" id="GO:0009252">
    <property type="term" value="P:peptidoglycan biosynthetic process"/>
    <property type="evidence" value="ECO:0007669"/>
    <property type="project" value="UniProtKB-UniRule"/>
</dbReference>
<dbReference type="GO" id="GO:0008360">
    <property type="term" value="P:regulation of cell shape"/>
    <property type="evidence" value="ECO:0007669"/>
    <property type="project" value="UniProtKB-KW"/>
</dbReference>
<dbReference type="GO" id="GO:0019277">
    <property type="term" value="P:UDP-N-acetylgalactosamine biosynthetic process"/>
    <property type="evidence" value="ECO:0007669"/>
    <property type="project" value="InterPro"/>
</dbReference>
<dbReference type="CDD" id="cd01555">
    <property type="entry name" value="UdpNAET"/>
    <property type="match status" value="1"/>
</dbReference>
<dbReference type="FunFam" id="3.65.10.10:FF:000002">
    <property type="entry name" value="UDP-N-acetylglucosamine 1-carboxyvinyltransferase"/>
    <property type="match status" value="1"/>
</dbReference>
<dbReference type="Gene3D" id="3.65.10.10">
    <property type="entry name" value="Enolpyruvate transferase domain"/>
    <property type="match status" value="2"/>
</dbReference>
<dbReference type="HAMAP" id="MF_00111">
    <property type="entry name" value="MurA"/>
    <property type="match status" value="1"/>
</dbReference>
<dbReference type="InterPro" id="IPR001986">
    <property type="entry name" value="Enolpyruvate_Tfrase_dom"/>
</dbReference>
<dbReference type="InterPro" id="IPR036968">
    <property type="entry name" value="Enolpyruvate_Tfrase_sf"/>
</dbReference>
<dbReference type="InterPro" id="IPR050068">
    <property type="entry name" value="MurA_subfamily"/>
</dbReference>
<dbReference type="InterPro" id="IPR013792">
    <property type="entry name" value="RNA3'P_cycl/enolpyr_Trfase_a/b"/>
</dbReference>
<dbReference type="InterPro" id="IPR005750">
    <property type="entry name" value="UDP_GlcNAc_COvinyl_MurA"/>
</dbReference>
<dbReference type="NCBIfam" id="TIGR01072">
    <property type="entry name" value="murA"/>
    <property type="match status" value="1"/>
</dbReference>
<dbReference type="NCBIfam" id="NF006873">
    <property type="entry name" value="PRK09369.1"/>
    <property type="match status" value="1"/>
</dbReference>
<dbReference type="PANTHER" id="PTHR43783">
    <property type="entry name" value="UDP-N-ACETYLGLUCOSAMINE 1-CARBOXYVINYLTRANSFERASE"/>
    <property type="match status" value="1"/>
</dbReference>
<dbReference type="PANTHER" id="PTHR43783:SF1">
    <property type="entry name" value="UDP-N-ACETYLGLUCOSAMINE 1-CARBOXYVINYLTRANSFERASE"/>
    <property type="match status" value="1"/>
</dbReference>
<dbReference type="Pfam" id="PF00275">
    <property type="entry name" value="EPSP_synthase"/>
    <property type="match status" value="1"/>
</dbReference>
<dbReference type="SUPFAM" id="SSF55205">
    <property type="entry name" value="EPT/RTPC-like"/>
    <property type="match status" value="1"/>
</dbReference>
<feature type="chain" id="PRO_0000231262" description="UDP-N-acetylglucosamine 1-carboxyvinyltransferase">
    <location>
        <begin position="1"/>
        <end position="419"/>
    </location>
</feature>
<feature type="active site" description="Proton donor" evidence="1">
    <location>
        <position position="115"/>
    </location>
</feature>
<feature type="binding site" evidence="1">
    <location>
        <begin position="22"/>
        <end position="23"/>
    </location>
    <ligand>
        <name>phosphoenolpyruvate</name>
        <dbReference type="ChEBI" id="CHEBI:58702"/>
    </ligand>
</feature>
<feature type="binding site" evidence="1">
    <location>
        <position position="91"/>
    </location>
    <ligand>
        <name>UDP-N-acetyl-alpha-D-glucosamine</name>
        <dbReference type="ChEBI" id="CHEBI:57705"/>
    </ligand>
</feature>
<feature type="binding site" evidence="1">
    <location>
        <begin position="120"/>
        <end position="124"/>
    </location>
    <ligand>
        <name>UDP-N-acetyl-alpha-D-glucosamine</name>
        <dbReference type="ChEBI" id="CHEBI:57705"/>
    </ligand>
</feature>
<feature type="binding site" evidence="1">
    <location>
        <begin position="160"/>
        <end position="163"/>
    </location>
    <ligand>
        <name>UDP-N-acetyl-alpha-D-glucosamine</name>
        <dbReference type="ChEBI" id="CHEBI:57705"/>
    </ligand>
</feature>
<feature type="binding site" evidence="1">
    <location>
        <position position="305"/>
    </location>
    <ligand>
        <name>UDP-N-acetyl-alpha-D-glucosamine</name>
        <dbReference type="ChEBI" id="CHEBI:57705"/>
    </ligand>
</feature>
<feature type="binding site" evidence="1">
    <location>
        <position position="327"/>
    </location>
    <ligand>
        <name>UDP-N-acetyl-alpha-D-glucosamine</name>
        <dbReference type="ChEBI" id="CHEBI:57705"/>
    </ligand>
</feature>
<feature type="modified residue" description="2-(S-cysteinyl)pyruvic acid O-phosphothioketal" evidence="1">
    <location>
        <position position="115"/>
    </location>
</feature>
<name>MURA_SHIDS</name>
<keyword id="KW-0131">Cell cycle</keyword>
<keyword id="KW-0132">Cell division</keyword>
<keyword id="KW-0133">Cell shape</keyword>
<keyword id="KW-0961">Cell wall biogenesis/degradation</keyword>
<keyword id="KW-0963">Cytoplasm</keyword>
<keyword id="KW-0573">Peptidoglycan synthesis</keyword>
<keyword id="KW-0670">Pyruvate</keyword>
<keyword id="KW-1185">Reference proteome</keyword>
<keyword id="KW-0808">Transferase</keyword>
<organism>
    <name type="scientific">Shigella dysenteriae serotype 1 (strain Sd197)</name>
    <dbReference type="NCBI Taxonomy" id="300267"/>
    <lineage>
        <taxon>Bacteria</taxon>
        <taxon>Pseudomonadati</taxon>
        <taxon>Pseudomonadota</taxon>
        <taxon>Gammaproteobacteria</taxon>
        <taxon>Enterobacterales</taxon>
        <taxon>Enterobacteriaceae</taxon>
        <taxon>Shigella</taxon>
    </lineage>
</organism>
<protein>
    <recommendedName>
        <fullName evidence="1">UDP-N-acetylglucosamine 1-carboxyvinyltransferase</fullName>
        <ecNumber evidence="1">2.5.1.7</ecNumber>
    </recommendedName>
    <alternativeName>
        <fullName evidence="1">Enoylpyruvate transferase</fullName>
    </alternativeName>
    <alternativeName>
        <fullName evidence="1">UDP-N-acetylglucosamine enolpyruvyl transferase</fullName>
        <shortName evidence="1">EPT</shortName>
    </alternativeName>
</protein>